<name>G6PI_ECO81</name>
<organism>
    <name type="scientific">Escherichia coli O81 (strain ED1a)</name>
    <dbReference type="NCBI Taxonomy" id="585397"/>
    <lineage>
        <taxon>Bacteria</taxon>
        <taxon>Pseudomonadati</taxon>
        <taxon>Pseudomonadota</taxon>
        <taxon>Gammaproteobacteria</taxon>
        <taxon>Enterobacterales</taxon>
        <taxon>Enterobacteriaceae</taxon>
        <taxon>Escherichia</taxon>
    </lineage>
</organism>
<protein>
    <recommendedName>
        <fullName evidence="1">Glucose-6-phosphate isomerase</fullName>
        <shortName evidence="1">GPI</shortName>
        <ecNumber evidence="1">5.3.1.9</ecNumber>
    </recommendedName>
    <alternativeName>
        <fullName evidence="1">Phosphoglucose isomerase</fullName>
        <shortName evidence="1">PGI</shortName>
    </alternativeName>
    <alternativeName>
        <fullName evidence="1">Phosphohexose isomerase</fullName>
        <shortName evidence="1">PHI</shortName>
    </alternativeName>
</protein>
<proteinExistence type="inferred from homology"/>
<sequence>MKNINPTQTAAWQALQKHFDEMKDVTIADLFAKDGDRFSKFSATFDDQMLVDYSKNRITEETLAKLQDLAKECDLAGAIKSMFSGEKINRTENRAVLHVALRNRSNTPILVDGKDVMPEVNAVLEKMKTFSEAIISGEWKGYTGKAITDVVNIGIGGSDLGPYMVTEALRPYKNHLNMHFVSNVDGTHIAEVLKKVNPETTLFLVASKTFTTQETMTNAHSARDWFLKAAGDEKHVAKHFAALSTNAKAVGEFGIDTANMFEFWDWVGGRYSLWSAIGLSIVLSIGFDNFVELLSGAHAMDKHFSTTPAEKNLPVLLALIGIWYNNFFGAETEAILPYDQYMHRFAAYFQQGNMESNGKYVDRNGKVVDYQTGPIIWGEPGTNGQHAFYQLIHQGTKMVPCDFIAPAITHNPLSDHHQKLLSNFFAQTEALAFGKSREVVEQEYRDQGKDPATLDYVVPFKVFEGNRPTNSILLREITPFSLGALIALYEHKIFTQGVILNIFTFDQWGVELGKQLANRILPELKDDKEISSHDSSTNGLINRYKAWRG</sequence>
<evidence type="ECO:0000255" key="1">
    <source>
        <dbReference type="HAMAP-Rule" id="MF_00473"/>
    </source>
</evidence>
<feature type="chain" id="PRO_1000135529" description="Glucose-6-phosphate isomerase">
    <location>
        <begin position="1"/>
        <end position="549"/>
    </location>
</feature>
<feature type="active site" description="Proton donor" evidence="1">
    <location>
        <position position="355"/>
    </location>
</feature>
<feature type="active site" evidence="1">
    <location>
        <position position="386"/>
    </location>
</feature>
<feature type="active site" evidence="1">
    <location>
        <position position="514"/>
    </location>
</feature>
<feature type="modified residue" description="N6-acetyllysine" evidence="1">
    <location>
        <position position="80"/>
    </location>
</feature>
<feature type="modified residue" description="N6-acetyllysine" evidence="1">
    <location>
        <position position="228"/>
    </location>
</feature>
<feature type="modified residue" description="N6-acetyllysine" evidence="1">
    <location>
        <position position="234"/>
    </location>
</feature>
<keyword id="KW-0007">Acetylation</keyword>
<keyword id="KW-0963">Cytoplasm</keyword>
<keyword id="KW-0312">Gluconeogenesis</keyword>
<keyword id="KW-0324">Glycolysis</keyword>
<keyword id="KW-0413">Isomerase</keyword>
<accession>B7MRF7</accession>
<reference key="1">
    <citation type="journal article" date="2009" name="PLoS Genet.">
        <title>Organised genome dynamics in the Escherichia coli species results in highly diverse adaptive paths.</title>
        <authorList>
            <person name="Touchon M."/>
            <person name="Hoede C."/>
            <person name="Tenaillon O."/>
            <person name="Barbe V."/>
            <person name="Baeriswyl S."/>
            <person name="Bidet P."/>
            <person name="Bingen E."/>
            <person name="Bonacorsi S."/>
            <person name="Bouchier C."/>
            <person name="Bouvet O."/>
            <person name="Calteau A."/>
            <person name="Chiapello H."/>
            <person name="Clermont O."/>
            <person name="Cruveiller S."/>
            <person name="Danchin A."/>
            <person name="Diard M."/>
            <person name="Dossat C."/>
            <person name="Karoui M.E."/>
            <person name="Frapy E."/>
            <person name="Garry L."/>
            <person name="Ghigo J.M."/>
            <person name="Gilles A.M."/>
            <person name="Johnson J."/>
            <person name="Le Bouguenec C."/>
            <person name="Lescat M."/>
            <person name="Mangenot S."/>
            <person name="Martinez-Jehanne V."/>
            <person name="Matic I."/>
            <person name="Nassif X."/>
            <person name="Oztas S."/>
            <person name="Petit M.A."/>
            <person name="Pichon C."/>
            <person name="Rouy Z."/>
            <person name="Ruf C.S."/>
            <person name="Schneider D."/>
            <person name="Tourret J."/>
            <person name="Vacherie B."/>
            <person name="Vallenet D."/>
            <person name="Medigue C."/>
            <person name="Rocha E.P.C."/>
            <person name="Denamur E."/>
        </authorList>
    </citation>
    <scope>NUCLEOTIDE SEQUENCE [LARGE SCALE GENOMIC DNA]</scope>
    <source>
        <strain>ED1a</strain>
    </source>
</reference>
<gene>
    <name evidence="1" type="primary">pgi</name>
    <name type="ordered locus">ECED1_4740</name>
</gene>
<comment type="function">
    <text evidence="1">Catalyzes the reversible isomerization of glucose-6-phosphate to fructose-6-phosphate.</text>
</comment>
<comment type="catalytic activity">
    <reaction evidence="1">
        <text>alpha-D-glucose 6-phosphate = beta-D-fructose 6-phosphate</text>
        <dbReference type="Rhea" id="RHEA:11816"/>
        <dbReference type="ChEBI" id="CHEBI:57634"/>
        <dbReference type="ChEBI" id="CHEBI:58225"/>
        <dbReference type="EC" id="5.3.1.9"/>
    </reaction>
</comment>
<comment type="pathway">
    <text evidence="1">Carbohydrate biosynthesis; gluconeogenesis.</text>
</comment>
<comment type="pathway">
    <text evidence="1">Carbohydrate degradation; glycolysis; D-glyceraldehyde 3-phosphate and glycerone phosphate from D-glucose: step 2/4.</text>
</comment>
<comment type="subcellular location">
    <subcellularLocation>
        <location evidence="1">Cytoplasm</location>
    </subcellularLocation>
</comment>
<comment type="similarity">
    <text evidence="1">Belongs to the GPI family.</text>
</comment>
<dbReference type="EC" id="5.3.1.9" evidence="1"/>
<dbReference type="EMBL" id="CU928162">
    <property type="protein sequence ID" value="CAR10845.2"/>
    <property type="molecule type" value="Genomic_DNA"/>
</dbReference>
<dbReference type="RefSeq" id="WP_000789981.1">
    <property type="nucleotide sequence ID" value="NC_011745.1"/>
</dbReference>
<dbReference type="SMR" id="B7MRF7"/>
<dbReference type="KEGG" id="ecq:ECED1_4740"/>
<dbReference type="HOGENOM" id="CLU_017947_3_1_6"/>
<dbReference type="UniPathway" id="UPA00109">
    <property type="reaction ID" value="UER00181"/>
</dbReference>
<dbReference type="UniPathway" id="UPA00138"/>
<dbReference type="Proteomes" id="UP000000748">
    <property type="component" value="Chromosome"/>
</dbReference>
<dbReference type="GO" id="GO:0005829">
    <property type="term" value="C:cytosol"/>
    <property type="evidence" value="ECO:0007669"/>
    <property type="project" value="TreeGrafter"/>
</dbReference>
<dbReference type="GO" id="GO:0097367">
    <property type="term" value="F:carbohydrate derivative binding"/>
    <property type="evidence" value="ECO:0007669"/>
    <property type="project" value="InterPro"/>
</dbReference>
<dbReference type="GO" id="GO:0004347">
    <property type="term" value="F:glucose-6-phosphate isomerase activity"/>
    <property type="evidence" value="ECO:0007669"/>
    <property type="project" value="UniProtKB-UniRule"/>
</dbReference>
<dbReference type="GO" id="GO:0048029">
    <property type="term" value="F:monosaccharide binding"/>
    <property type="evidence" value="ECO:0007669"/>
    <property type="project" value="TreeGrafter"/>
</dbReference>
<dbReference type="GO" id="GO:0006094">
    <property type="term" value="P:gluconeogenesis"/>
    <property type="evidence" value="ECO:0007669"/>
    <property type="project" value="UniProtKB-UniRule"/>
</dbReference>
<dbReference type="GO" id="GO:0051156">
    <property type="term" value="P:glucose 6-phosphate metabolic process"/>
    <property type="evidence" value="ECO:0007669"/>
    <property type="project" value="TreeGrafter"/>
</dbReference>
<dbReference type="GO" id="GO:0006096">
    <property type="term" value="P:glycolytic process"/>
    <property type="evidence" value="ECO:0007669"/>
    <property type="project" value="UniProtKB-UniRule"/>
</dbReference>
<dbReference type="CDD" id="cd05015">
    <property type="entry name" value="SIS_PGI_1"/>
    <property type="match status" value="1"/>
</dbReference>
<dbReference type="CDD" id="cd05016">
    <property type="entry name" value="SIS_PGI_2"/>
    <property type="match status" value="1"/>
</dbReference>
<dbReference type="FunFam" id="1.10.1390.10:FF:000001">
    <property type="entry name" value="Glucose-6-phosphate isomerase"/>
    <property type="match status" value="1"/>
</dbReference>
<dbReference type="FunFam" id="3.40.50.10490:FF:000004">
    <property type="entry name" value="Glucose-6-phosphate isomerase"/>
    <property type="match status" value="1"/>
</dbReference>
<dbReference type="Gene3D" id="1.10.1390.10">
    <property type="match status" value="1"/>
</dbReference>
<dbReference type="Gene3D" id="3.40.50.10490">
    <property type="entry name" value="Glucose-6-phosphate isomerase like protein, domain 1"/>
    <property type="match status" value="2"/>
</dbReference>
<dbReference type="HAMAP" id="MF_00473">
    <property type="entry name" value="G6P_isomerase"/>
    <property type="match status" value="1"/>
</dbReference>
<dbReference type="InterPro" id="IPR001672">
    <property type="entry name" value="G6P_Isomerase"/>
</dbReference>
<dbReference type="InterPro" id="IPR023096">
    <property type="entry name" value="G6P_Isomerase_C"/>
</dbReference>
<dbReference type="InterPro" id="IPR018189">
    <property type="entry name" value="Phosphoglucose_isomerase_CS"/>
</dbReference>
<dbReference type="InterPro" id="IPR046348">
    <property type="entry name" value="SIS_dom_sf"/>
</dbReference>
<dbReference type="InterPro" id="IPR035476">
    <property type="entry name" value="SIS_PGI_1"/>
</dbReference>
<dbReference type="InterPro" id="IPR035482">
    <property type="entry name" value="SIS_PGI_2"/>
</dbReference>
<dbReference type="NCBIfam" id="NF001211">
    <property type="entry name" value="PRK00179.1"/>
    <property type="match status" value="1"/>
</dbReference>
<dbReference type="PANTHER" id="PTHR11469">
    <property type="entry name" value="GLUCOSE-6-PHOSPHATE ISOMERASE"/>
    <property type="match status" value="1"/>
</dbReference>
<dbReference type="PANTHER" id="PTHR11469:SF1">
    <property type="entry name" value="GLUCOSE-6-PHOSPHATE ISOMERASE"/>
    <property type="match status" value="1"/>
</dbReference>
<dbReference type="Pfam" id="PF00342">
    <property type="entry name" value="PGI"/>
    <property type="match status" value="1"/>
</dbReference>
<dbReference type="PRINTS" id="PR00662">
    <property type="entry name" value="G6PISOMERASE"/>
</dbReference>
<dbReference type="SUPFAM" id="SSF53697">
    <property type="entry name" value="SIS domain"/>
    <property type="match status" value="1"/>
</dbReference>
<dbReference type="PROSITE" id="PS00765">
    <property type="entry name" value="P_GLUCOSE_ISOMERASE_1"/>
    <property type="match status" value="1"/>
</dbReference>
<dbReference type="PROSITE" id="PS00174">
    <property type="entry name" value="P_GLUCOSE_ISOMERASE_2"/>
    <property type="match status" value="1"/>
</dbReference>
<dbReference type="PROSITE" id="PS51463">
    <property type="entry name" value="P_GLUCOSE_ISOMERASE_3"/>
    <property type="match status" value="1"/>
</dbReference>